<gene>
    <name type="primary">Ccdc126</name>
</gene>
<evidence type="ECO:0000255" key="1"/>
<evidence type="ECO:0000256" key="2">
    <source>
        <dbReference type="SAM" id="MobiDB-lite"/>
    </source>
</evidence>
<evidence type="ECO:0000303" key="3">
    <source>
    </source>
</evidence>
<evidence type="ECO:0000305" key="4"/>
<organism>
    <name type="scientific">Mus musculus</name>
    <name type="common">Mouse</name>
    <dbReference type="NCBI Taxonomy" id="10090"/>
    <lineage>
        <taxon>Eukaryota</taxon>
        <taxon>Metazoa</taxon>
        <taxon>Chordata</taxon>
        <taxon>Craniata</taxon>
        <taxon>Vertebrata</taxon>
        <taxon>Euteleostomi</taxon>
        <taxon>Mammalia</taxon>
        <taxon>Eutheria</taxon>
        <taxon>Euarchontoglires</taxon>
        <taxon>Glires</taxon>
        <taxon>Rodentia</taxon>
        <taxon>Myomorpha</taxon>
        <taxon>Muroidea</taxon>
        <taxon>Muridae</taxon>
        <taxon>Murinae</taxon>
        <taxon>Mus</taxon>
        <taxon>Mus</taxon>
    </lineage>
</organism>
<reference key="1">
    <citation type="journal article" date="2005" name="Science">
        <title>The transcriptional landscape of the mammalian genome.</title>
        <authorList>
            <person name="Carninci P."/>
            <person name="Kasukawa T."/>
            <person name="Katayama S."/>
            <person name="Gough J."/>
            <person name="Frith M.C."/>
            <person name="Maeda N."/>
            <person name="Oyama R."/>
            <person name="Ravasi T."/>
            <person name="Lenhard B."/>
            <person name="Wells C."/>
            <person name="Kodzius R."/>
            <person name="Shimokawa K."/>
            <person name="Bajic V.B."/>
            <person name="Brenner S.E."/>
            <person name="Batalov S."/>
            <person name="Forrest A.R."/>
            <person name="Zavolan M."/>
            <person name="Davis M.J."/>
            <person name="Wilming L.G."/>
            <person name="Aidinis V."/>
            <person name="Allen J.E."/>
            <person name="Ambesi-Impiombato A."/>
            <person name="Apweiler R."/>
            <person name="Aturaliya R.N."/>
            <person name="Bailey T.L."/>
            <person name="Bansal M."/>
            <person name="Baxter L."/>
            <person name="Beisel K.W."/>
            <person name="Bersano T."/>
            <person name="Bono H."/>
            <person name="Chalk A.M."/>
            <person name="Chiu K.P."/>
            <person name="Choudhary V."/>
            <person name="Christoffels A."/>
            <person name="Clutterbuck D.R."/>
            <person name="Crowe M.L."/>
            <person name="Dalla E."/>
            <person name="Dalrymple B.P."/>
            <person name="de Bono B."/>
            <person name="Della Gatta G."/>
            <person name="di Bernardo D."/>
            <person name="Down T."/>
            <person name="Engstrom P."/>
            <person name="Fagiolini M."/>
            <person name="Faulkner G."/>
            <person name="Fletcher C.F."/>
            <person name="Fukushima T."/>
            <person name="Furuno M."/>
            <person name="Futaki S."/>
            <person name="Gariboldi M."/>
            <person name="Georgii-Hemming P."/>
            <person name="Gingeras T.R."/>
            <person name="Gojobori T."/>
            <person name="Green R.E."/>
            <person name="Gustincich S."/>
            <person name="Harbers M."/>
            <person name="Hayashi Y."/>
            <person name="Hensch T.K."/>
            <person name="Hirokawa N."/>
            <person name="Hill D."/>
            <person name="Huminiecki L."/>
            <person name="Iacono M."/>
            <person name="Ikeo K."/>
            <person name="Iwama A."/>
            <person name="Ishikawa T."/>
            <person name="Jakt M."/>
            <person name="Kanapin A."/>
            <person name="Katoh M."/>
            <person name="Kawasawa Y."/>
            <person name="Kelso J."/>
            <person name="Kitamura H."/>
            <person name="Kitano H."/>
            <person name="Kollias G."/>
            <person name="Krishnan S.P."/>
            <person name="Kruger A."/>
            <person name="Kummerfeld S.K."/>
            <person name="Kurochkin I.V."/>
            <person name="Lareau L.F."/>
            <person name="Lazarevic D."/>
            <person name="Lipovich L."/>
            <person name="Liu J."/>
            <person name="Liuni S."/>
            <person name="McWilliam S."/>
            <person name="Madan Babu M."/>
            <person name="Madera M."/>
            <person name="Marchionni L."/>
            <person name="Matsuda H."/>
            <person name="Matsuzawa S."/>
            <person name="Miki H."/>
            <person name="Mignone F."/>
            <person name="Miyake S."/>
            <person name="Morris K."/>
            <person name="Mottagui-Tabar S."/>
            <person name="Mulder N."/>
            <person name="Nakano N."/>
            <person name="Nakauchi H."/>
            <person name="Ng P."/>
            <person name="Nilsson R."/>
            <person name="Nishiguchi S."/>
            <person name="Nishikawa S."/>
            <person name="Nori F."/>
            <person name="Ohara O."/>
            <person name="Okazaki Y."/>
            <person name="Orlando V."/>
            <person name="Pang K.C."/>
            <person name="Pavan W.J."/>
            <person name="Pavesi G."/>
            <person name="Pesole G."/>
            <person name="Petrovsky N."/>
            <person name="Piazza S."/>
            <person name="Reed J."/>
            <person name="Reid J.F."/>
            <person name="Ring B.Z."/>
            <person name="Ringwald M."/>
            <person name="Rost B."/>
            <person name="Ruan Y."/>
            <person name="Salzberg S.L."/>
            <person name="Sandelin A."/>
            <person name="Schneider C."/>
            <person name="Schoenbach C."/>
            <person name="Sekiguchi K."/>
            <person name="Semple C.A."/>
            <person name="Seno S."/>
            <person name="Sessa L."/>
            <person name="Sheng Y."/>
            <person name="Shibata Y."/>
            <person name="Shimada H."/>
            <person name="Shimada K."/>
            <person name="Silva D."/>
            <person name="Sinclair B."/>
            <person name="Sperling S."/>
            <person name="Stupka E."/>
            <person name="Sugiura K."/>
            <person name="Sultana R."/>
            <person name="Takenaka Y."/>
            <person name="Taki K."/>
            <person name="Tammoja K."/>
            <person name="Tan S.L."/>
            <person name="Tang S."/>
            <person name="Taylor M.S."/>
            <person name="Tegner J."/>
            <person name="Teichmann S.A."/>
            <person name="Ueda H.R."/>
            <person name="van Nimwegen E."/>
            <person name="Verardo R."/>
            <person name="Wei C.L."/>
            <person name="Yagi K."/>
            <person name="Yamanishi H."/>
            <person name="Zabarovsky E."/>
            <person name="Zhu S."/>
            <person name="Zimmer A."/>
            <person name="Hide W."/>
            <person name="Bult C."/>
            <person name="Grimmond S.M."/>
            <person name="Teasdale R.D."/>
            <person name="Liu E.T."/>
            <person name="Brusic V."/>
            <person name="Quackenbush J."/>
            <person name="Wahlestedt C."/>
            <person name="Mattick J.S."/>
            <person name="Hume D.A."/>
            <person name="Kai C."/>
            <person name="Sasaki D."/>
            <person name="Tomaru Y."/>
            <person name="Fukuda S."/>
            <person name="Kanamori-Katayama M."/>
            <person name="Suzuki M."/>
            <person name="Aoki J."/>
            <person name="Arakawa T."/>
            <person name="Iida J."/>
            <person name="Imamura K."/>
            <person name="Itoh M."/>
            <person name="Kato T."/>
            <person name="Kawaji H."/>
            <person name="Kawagashira N."/>
            <person name="Kawashima T."/>
            <person name="Kojima M."/>
            <person name="Kondo S."/>
            <person name="Konno H."/>
            <person name="Nakano K."/>
            <person name="Ninomiya N."/>
            <person name="Nishio T."/>
            <person name="Okada M."/>
            <person name="Plessy C."/>
            <person name="Shibata K."/>
            <person name="Shiraki T."/>
            <person name="Suzuki S."/>
            <person name="Tagami M."/>
            <person name="Waki K."/>
            <person name="Watahiki A."/>
            <person name="Okamura-Oho Y."/>
            <person name="Suzuki H."/>
            <person name="Kawai J."/>
            <person name="Hayashizaki Y."/>
        </authorList>
    </citation>
    <scope>NUCLEOTIDE SEQUENCE [LARGE SCALE MRNA] (ISOFORM 1)</scope>
    <source>
        <strain>C57BL/6J</strain>
        <tissue>Medulla oblongata</tissue>
        <tissue>Osteoclast</tissue>
    </source>
</reference>
<reference key="2">
    <citation type="journal article" date="2004" name="Genome Res.">
        <title>The status, quality, and expansion of the NIH full-length cDNA project: the Mammalian Gene Collection (MGC).</title>
        <authorList>
            <consortium name="The MGC Project Team"/>
        </authorList>
    </citation>
    <scope>NUCLEOTIDE SEQUENCE [LARGE SCALE MRNA] (ISOFORMS 1 AND 2)</scope>
    <source>
        <tissue>Eye</tissue>
    </source>
</reference>
<accession>Q8BIS8</accession>
<accession>Q3TXH2</accession>
<accession>Q501L9</accession>
<keyword id="KW-0025">Alternative splicing</keyword>
<keyword id="KW-0325">Glycoprotein</keyword>
<keyword id="KW-1185">Reference proteome</keyword>
<keyword id="KW-0964">Secreted</keyword>
<keyword id="KW-0732">Signal</keyword>
<sequence>MFRTISRKNMSQKLSFLLLVFGLIWGLMLLHYTLQQPRRQSSVKLREQILDLSKRYVKALAEESRSTADVDSGASMAGYADLKRTIAVLLDDILQRLVKLESKVDYIVVNGSATNTTNGTNGNLVPVTTNKRTSVSGSVR</sequence>
<dbReference type="EMBL" id="AK018135">
    <property type="protein sequence ID" value="BAC25544.1"/>
    <property type="molecule type" value="mRNA"/>
</dbReference>
<dbReference type="EMBL" id="AK159264">
    <property type="protein sequence ID" value="BAE34944.1"/>
    <property type="molecule type" value="mRNA"/>
</dbReference>
<dbReference type="EMBL" id="BC095987">
    <property type="protein sequence ID" value="AAH95987.1"/>
    <property type="molecule type" value="mRNA"/>
</dbReference>
<dbReference type="EMBL" id="BC117837">
    <property type="protein sequence ID" value="AAI17838.1"/>
    <property type="molecule type" value="mRNA"/>
</dbReference>
<dbReference type="CCDS" id="CCDS20125.1">
    <molecule id="Q8BIS8-1"/>
</dbReference>
<dbReference type="CCDS" id="CCDS80531.1">
    <molecule id="Q8BIS8-2"/>
</dbReference>
<dbReference type="RefSeq" id="NP_001298041.1">
    <molecule id="Q8BIS8-2"/>
    <property type="nucleotide sequence ID" value="NM_001311112.1"/>
</dbReference>
<dbReference type="RefSeq" id="NP_780307.1">
    <molecule id="Q8BIS8-1"/>
    <property type="nucleotide sequence ID" value="NM_175098.6"/>
</dbReference>
<dbReference type="RefSeq" id="XP_011239722.1">
    <molecule id="Q8BIS8-1"/>
    <property type="nucleotide sequence ID" value="XM_011241420.4"/>
</dbReference>
<dbReference type="SMR" id="Q8BIS8"/>
<dbReference type="FunCoup" id="Q8BIS8">
    <property type="interactions" value="1357"/>
</dbReference>
<dbReference type="STRING" id="10090.ENSMUSP00000058077"/>
<dbReference type="GlyCosmos" id="Q8BIS8">
    <property type="glycosylation" value="1 site, No reported glycans"/>
</dbReference>
<dbReference type="GlyGen" id="Q8BIS8">
    <property type="glycosylation" value="1 site"/>
</dbReference>
<dbReference type="iPTMnet" id="Q8BIS8"/>
<dbReference type="PhosphoSitePlus" id="Q8BIS8"/>
<dbReference type="PaxDb" id="10090-ENSMUSP00000058077"/>
<dbReference type="PeptideAtlas" id="Q8BIS8"/>
<dbReference type="ProteomicsDB" id="279940">
    <molecule id="Q8BIS8-1"/>
</dbReference>
<dbReference type="ProteomicsDB" id="279941">
    <molecule id="Q8BIS8-2"/>
</dbReference>
<dbReference type="Antibodypedia" id="12117">
    <property type="antibodies" value="73 antibodies from 14 providers"/>
</dbReference>
<dbReference type="DNASU" id="57895"/>
<dbReference type="Ensembl" id="ENSMUST00000055559.8">
    <molecule id="Q8BIS8-1"/>
    <property type="protein sequence ID" value="ENSMUSP00000058077.8"/>
    <property type="gene ID" value="ENSMUSG00000050786.9"/>
</dbReference>
<dbReference type="Ensembl" id="ENSMUST00000114491.2">
    <molecule id="Q8BIS8-2"/>
    <property type="protein sequence ID" value="ENSMUSP00000110135.2"/>
    <property type="gene ID" value="ENSMUSG00000050786.9"/>
</dbReference>
<dbReference type="GeneID" id="57895"/>
<dbReference type="KEGG" id="mmu:57895"/>
<dbReference type="UCSC" id="uc009bwp.1">
    <molecule id="Q8BIS8-1"/>
    <property type="organism name" value="mouse"/>
</dbReference>
<dbReference type="UCSC" id="uc009bwq.1">
    <molecule id="Q8BIS8-2"/>
    <property type="organism name" value="mouse"/>
</dbReference>
<dbReference type="AGR" id="MGI:1889376"/>
<dbReference type="CTD" id="90693"/>
<dbReference type="MGI" id="MGI:1889376">
    <property type="gene designation" value="Ccdc126"/>
</dbReference>
<dbReference type="VEuPathDB" id="HostDB:ENSMUSG00000050786"/>
<dbReference type="eggNOG" id="ENOG502RY1D">
    <property type="taxonomic scope" value="Eukaryota"/>
</dbReference>
<dbReference type="GeneTree" id="ENSGT00940000153470"/>
<dbReference type="HOGENOM" id="CLU_136286_0_0_1"/>
<dbReference type="InParanoid" id="Q8BIS8"/>
<dbReference type="OMA" id="VNASAHN"/>
<dbReference type="OrthoDB" id="9946758at2759"/>
<dbReference type="PhylomeDB" id="Q8BIS8"/>
<dbReference type="TreeFam" id="TF332515"/>
<dbReference type="BioGRID-ORCS" id="57895">
    <property type="hits" value="2 hits in 77 CRISPR screens"/>
</dbReference>
<dbReference type="ChiTaRS" id="Ccdc126">
    <property type="organism name" value="mouse"/>
</dbReference>
<dbReference type="PRO" id="PR:Q8BIS8"/>
<dbReference type="Proteomes" id="UP000000589">
    <property type="component" value="Chromosome 6"/>
</dbReference>
<dbReference type="RNAct" id="Q8BIS8">
    <property type="molecule type" value="protein"/>
</dbReference>
<dbReference type="Bgee" id="ENSMUSG00000050786">
    <property type="expression patterns" value="Expressed in pigmented layer of retina and 213 other cell types or tissues"/>
</dbReference>
<dbReference type="GO" id="GO:0005576">
    <property type="term" value="C:extracellular region"/>
    <property type="evidence" value="ECO:0007669"/>
    <property type="project" value="UniProtKB-SubCell"/>
</dbReference>
<dbReference type="InterPro" id="IPR042759">
    <property type="entry name" value="CCDC126"/>
</dbReference>
<dbReference type="InterPro" id="IPR027833">
    <property type="entry name" value="MGT5A-like_N"/>
</dbReference>
<dbReference type="PANTHER" id="PTHR46941">
    <property type="entry name" value="COILED-COIL DOMAIN-CONTAINING PROTEIN 126"/>
    <property type="match status" value="1"/>
</dbReference>
<dbReference type="PANTHER" id="PTHR46941:SF1">
    <property type="entry name" value="COILED-COIL DOMAIN-CONTAINING PROTEIN 126"/>
    <property type="match status" value="1"/>
</dbReference>
<dbReference type="Pfam" id="PF15027">
    <property type="entry name" value="MGT5A_N"/>
    <property type="match status" value="1"/>
</dbReference>
<comment type="subcellular location">
    <subcellularLocation>
        <location evidence="4">Secreted</location>
    </subcellularLocation>
</comment>
<comment type="alternative products">
    <event type="alternative splicing"/>
    <isoform>
        <id>Q8BIS8-1</id>
        <name>1</name>
        <sequence type="displayed"/>
    </isoform>
    <isoform>
        <id>Q8BIS8-2</id>
        <name>2</name>
        <sequence type="described" ref="VSP_025785"/>
    </isoform>
</comment>
<protein>
    <recommendedName>
        <fullName>Coiled-coil domain-containing protein 126</fullName>
    </recommendedName>
</protein>
<feature type="signal peptide" evidence="1">
    <location>
        <begin position="1"/>
        <end position="35"/>
    </location>
</feature>
<feature type="chain" id="PRO_0000288817" description="Coiled-coil domain-containing protein 126">
    <location>
        <begin position="36"/>
        <end position="140"/>
    </location>
</feature>
<feature type="region of interest" description="Disordered" evidence="2">
    <location>
        <begin position="118"/>
        <end position="140"/>
    </location>
</feature>
<feature type="compositionally biased region" description="Low complexity" evidence="2">
    <location>
        <begin position="118"/>
        <end position="130"/>
    </location>
</feature>
<feature type="compositionally biased region" description="Polar residues" evidence="2">
    <location>
        <begin position="131"/>
        <end position="140"/>
    </location>
</feature>
<feature type="glycosylation site" description="N-linked (GlcNAc...) asparagine" evidence="1">
    <location>
        <position position="110"/>
    </location>
</feature>
<feature type="splice variant" id="VSP_025785" description="In isoform 2." evidence="3">
    <original>ADLKRTIAVLLDDILQRLVKLESKVDYIVVNGSATNTTNGTNGNLVPVTTNKRTSVSGSVR</original>
    <variation>VLHLPGPASLYLLSNSASQEMTHC</variation>
    <location>
        <begin position="80"/>
        <end position="140"/>
    </location>
</feature>
<proteinExistence type="evidence at transcript level"/>
<name>CC126_MOUSE</name>